<feature type="chain" id="PRO_0000137976" description="Glycerol-3-phosphate dehydrogenase [NAD(P)+]">
    <location>
        <begin position="1"/>
        <end position="341"/>
    </location>
</feature>
<feature type="active site" description="Proton acceptor" evidence="1">
    <location>
        <position position="194"/>
    </location>
</feature>
<feature type="binding site" evidence="1">
    <location>
        <position position="13"/>
    </location>
    <ligand>
        <name>NADPH</name>
        <dbReference type="ChEBI" id="CHEBI:57783"/>
    </ligand>
</feature>
<feature type="binding site" evidence="1">
    <location>
        <position position="14"/>
    </location>
    <ligand>
        <name>NADPH</name>
        <dbReference type="ChEBI" id="CHEBI:57783"/>
    </ligand>
</feature>
<feature type="binding site" evidence="1">
    <location>
        <position position="108"/>
    </location>
    <ligand>
        <name>NADPH</name>
        <dbReference type="ChEBI" id="CHEBI:57783"/>
    </ligand>
</feature>
<feature type="binding site" evidence="1">
    <location>
        <position position="108"/>
    </location>
    <ligand>
        <name>sn-glycerol 3-phosphate</name>
        <dbReference type="ChEBI" id="CHEBI:57597"/>
    </ligand>
</feature>
<feature type="binding site" evidence="1">
    <location>
        <position position="139"/>
    </location>
    <ligand>
        <name>sn-glycerol 3-phosphate</name>
        <dbReference type="ChEBI" id="CHEBI:57597"/>
    </ligand>
</feature>
<feature type="binding site" evidence="1">
    <location>
        <position position="141"/>
    </location>
    <ligand>
        <name>sn-glycerol 3-phosphate</name>
        <dbReference type="ChEBI" id="CHEBI:57597"/>
    </ligand>
</feature>
<feature type="binding site" evidence="1">
    <location>
        <position position="143"/>
    </location>
    <ligand>
        <name>NADPH</name>
        <dbReference type="ChEBI" id="CHEBI:57783"/>
    </ligand>
</feature>
<feature type="binding site" evidence="1">
    <location>
        <position position="194"/>
    </location>
    <ligand>
        <name>sn-glycerol 3-phosphate</name>
        <dbReference type="ChEBI" id="CHEBI:57597"/>
    </ligand>
</feature>
<feature type="binding site" evidence="1">
    <location>
        <position position="247"/>
    </location>
    <ligand>
        <name>sn-glycerol 3-phosphate</name>
        <dbReference type="ChEBI" id="CHEBI:57597"/>
    </ligand>
</feature>
<feature type="binding site" evidence="1">
    <location>
        <position position="257"/>
    </location>
    <ligand>
        <name>sn-glycerol 3-phosphate</name>
        <dbReference type="ChEBI" id="CHEBI:57597"/>
    </ligand>
</feature>
<feature type="binding site" evidence="1">
    <location>
        <position position="258"/>
    </location>
    <ligand>
        <name>NADPH</name>
        <dbReference type="ChEBI" id="CHEBI:57783"/>
    </ligand>
</feature>
<feature type="binding site" evidence="1">
    <location>
        <position position="258"/>
    </location>
    <ligand>
        <name>sn-glycerol 3-phosphate</name>
        <dbReference type="ChEBI" id="CHEBI:57597"/>
    </ligand>
</feature>
<feature type="binding site" evidence="1">
    <location>
        <position position="259"/>
    </location>
    <ligand>
        <name>sn-glycerol 3-phosphate</name>
        <dbReference type="ChEBI" id="CHEBI:57597"/>
    </ligand>
</feature>
<feature type="binding site" evidence="1">
    <location>
        <position position="282"/>
    </location>
    <ligand>
        <name>NADPH</name>
        <dbReference type="ChEBI" id="CHEBI:57783"/>
    </ligand>
</feature>
<feature type="binding site" evidence="1">
    <location>
        <position position="284"/>
    </location>
    <ligand>
        <name>NADPH</name>
        <dbReference type="ChEBI" id="CHEBI:57783"/>
    </ligand>
</feature>
<accession>Q9CFX6</accession>
<reference key="1">
    <citation type="journal article" date="2001" name="Genome Res.">
        <title>The complete genome sequence of the lactic acid bacterium Lactococcus lactis ssp. lactis IL1403.</title>
        <authorList>
            <person name="Bolotin A."/>
            <person name="Wincker P."/>
            <person name="Mauger S."/>
            <person name="Jaillon O."/>
            <person name="Malarme K."/>
            <person name="Weissenbach J."/>
            <person name="Ehrlich S.D."/>
            <person name="Sorokin A."/>
        </authorList>
    </citation>
    <scope>NUCLEOTIDE SEQUENCE [LARGE SCALE GENOMIC DNA]</scope>
    <source>
        <strain>IL1403</strain>
    </source>
</reference>
<proteinExistence type="inferred from homology"/>
<comment type="function">
    <text evidence="1">Catalyzes the reduction of the glycolytic intermediate dihydroxyacetone phosphate (DHAP) to sn-glycerol 3-phosphate (G3P), the key precursor for phospholipid synthesis.</text>
</comment>
<comment type="catalytic activity">
    <reaction evidence="1">
        <text>sn-glycerol 3-phosphate + NAD(+) = dihydroxyacetone phosphate + NADH + H(+)</text>
        <dbReference type="Rhea" id="RHEA:11092"/>
        <dbReference type="ChEBI" id="CHEBI:15378"/>
        <dbReference type="ChEBI" id="CHEBI:57540"/>
        <dbReference type="ChEBI" id="CHEBI:57597"/>
        <dbReference type="ChEBI" id="CHEBI:57642"/>
        <dbReference type="ChEBI" id="CHEBI:57945"/>
        <dbReference type="EC" id="1.1.1.94"/>
    </reaction>
    <physiologicalReaction direction="right-to-left" evidence="1">
        <dbReference type="Rhea" id="RHEA:11094"/>
    </physiologicalReaction>
</comment>
<comment type="catalytic activity">
    <reaction evidence="1">
        <text>sn-glycerol 3-phosphate + NADP(+) = dihydroxyacetone phosphate + NADPH + H(+)</text>
        <dbReference type="Rhea" id="RHEA:11096"/>
        <dbReference type="ChEBI" id="CHEBI:15378"/>
        <dbReference type="ChEBI" id="CHEBI:57597"/>
        <dbReference type="ChEBI" id="CHEBI:57642"/>
        <dbReference type="ChEBI" id="CHEBI:57783"/>
        <dbReference type="ChEBI" id="CHEBI:58349"/>
        <dbReference type="EC" id="1.1.1.94"/>
    </reaction>
    <physiologicalReaction direction="right-to-left" evidence="1">
        <dbReference type="Rhea" id="RHEA:11098"/>
    </physiologicalReaction>
</comment>
<comment type="pathway">
    <text evidence="1">Membrane lipid metabolism; glycerophospholipid metabolism.</text>
</comment>
<comment type="subcellular location">
    <subcellularLocation>
        <location evidence="1">Cytoplasm</location>
    </subcellularLocation>
</comment>
<comment type="similarity">
    <text evidence="1">Belongs to the NAD-dependent glycerol-3-phosphate dehydrogenase family.</text>
</comment>
<name>GPDA_LACLA</name>
<sequence>MNPQKIAVLGPGSWGTALSQVLNDNGHEVRIWGNNPEQMAEINEKHTNTRYFKDVVLDEKIKAFDRLDLALEDVDAILFVVPTKVTRLVAKQVAEVLKHKVHILHASKGLEQGTHERISTILEEEIPAQLRGEIVVVSGPSHAEETIVRDITLISAASKDHDEAKYAQAIFSNDYFRLYTNTDVIGVETAGALKNIIAVGAGALHGLGFGDNAKAAIITRGLAEITRLGVAMGAEPLTYSGLSGVGDLIVTGTSIHSRNWRAGDALGRGEKLADIEKNMGMVIEGVSTTKAAFELAQQLGIDMPITETIYKVLYENLDAKTGILDIMRRETRAENEFINNK</sequence>
<protein>
    <recommendedName>
        <fullName evidence="1">Glycerol-3-phosphate dehydrogenase [NAD(P)+]</fullName>
        <ecNumber evidence="1">1.1.1.94</ecNumber>
    </recommendedName>
    <alternativeName>
        <fullName evidence="1">NAD(P)(+)-dependent glycerol-3-phosphate dehydrogenase</fullName>
    </alternativeName>
    <alternativeName>
        <fullName evidence="1">NAD(P)H-dependent dihydroxyacetone-phosphate reductase</fullName>
    </alternativeName>
</protein>
<gene>
    <name evidence="1" type="primary">gpsA</name>
    <name type="ordered locus">LL1338</name>
    <name type="ORF">L0016</name>
</gene>
<dbReference type="EC" id="1.1.1.94" evidence="1"/>
<dbReference type="EMBL" id="AE005176">
    <property type="protein sequence ID" value="AAK05436.1"/>
    <property type="molecule type" value="Genomic_DNA"/>
</dbReference>
<dbReference type="PIR" id="B86792">
    <property type="entry name" value="B86792"/>
</dbReference>
<dbReference type="RefSeq" id="NP_267494.1">
    <property type="nucleotide sequence ID" value="NC_002662.1"/>
</dbReference>
<dbReference type="RefSeq" id="WP_003131086.1">
    <property type="nucleotide sequence ID" value="NC_002662.1"/>
</dbReference>
<dbReference type="SMR" id="Q9CFX6"/>
<dbReference type="PaxDb" id="272623-L0016"/>
<dbReference type="EnsemblBacteria" id="AAK05436">
    <property type="protein sequence ID" value="AAK05436"/>
    <property type="gene ID" value="L0016"/>
</dbReference>
<dbReference type="KEGG" id="lla:L0016"/>
<dbReference type="PATRIC" id="fig|272623.7.peg.1444"/>
<dbReference type="eggNOG" id="COG0240">
    <property type="taxonomic scope" value="Bacteria"/>
</dbReference>
<dbReference type="HOGENOM" id="CLU_033449_0_2_9"/>
<dbReference type="OrthoDB" id="9812273at2"/>
<dbReference type="UniPathway" id="UPA00940"/>
<dbReference type="Proteomes" id="UP000002196">
    <property type="component" value="Chromosome"/>
</dbReference>
<dbReference type="GO" id="GO:0005829">
    <property type="term" value="C:cytosol"/>
    <property type="evidence" value="ECO:0007669"/>
    <property type="project" value="TreeGrafter"/>
</dbReference>
<dbReference type="GO" id="GO:0047952">
    <property type="term" value="F:glycerol-3-phosphate dehydrogenase [NAD(P)+] activity"/>
    <property type="evidence" value="ECO:0007669"/>
    <property type="project" value="UniProtKB-UniRule"/>
</dbReference>
<dbReference type="GO" id="GO:0051287">
    <property type="term" value="F:NAD binding"/>
    <property type="evidence" value="ECO:0007669"/>
    <property type="project" value="InterPro"/>
</dbReference>
<dbReference type="GO" id="GO:0005975">
    <property type="term" value="P:carbohydrate metabolic process"/>
    <property type="evidence" value="ECO:0007669"/>
    <property type="project" value="InterPro"/>
</dbReference>
<dbReference type="GO" id="GO:0046167">
    <property type="term" value="P:glycerol-3-phosphate biosynthetic process"/>
    <property type="evidence" value="ECO:0007669"/>
    <property type="project" value="UniProtKB-UniRule"/>
</dbReference>
<dbReference type="GO" id="GO:0046168">
    <property type="term" value="P:glycerol-3-phosphate catabolic process"/>
    <property type="evidence" value="ECO:0007669"/>
    <property type="project" value="InterPro"/>
</dbReference>
<dbReference type="GO" id="GO:0006650">
    <property type="term" value="P:glycerophospholipid metabolic process"/>
    <property type="evidence" value="ECO:0007669"/>
    <property type="project" value="UniProtKB-UniRule"/>
</dbReference>
<dbReference type="GO" id="GO:0008654">
    <property type="term" value="P:phospholipid biosynthetic process"/>
    <property type="evidence" value="ECO:0007669"/>
    <property type="project" value="UniProtKB-KW"/>
</dbReference>
<dbReference type="FunFam" id="1.10.1040.10:FF:000001">
    <property type="entry name" value="Glycerol-3-phosphate dehydrogenase [NAD(P)+]"/>
    <property type="match status" value="1"/>
</dbReference>
<dbReference type="FunFam" id="3.40.50.720:FF:000019">
    <property type="entry name" value="Glycerol-3-phosphate dehydrogenase [NAD(P)+]"/>
    <property type="match status" value="1"/>
</dbReference>
<dbReference type="Gene3D" id="1.10.1040.10">
    <property type="entry name" value="N-(1-d-carboxylethyl)-l-norvaline Dehydrogenase, domain 2"/>
    <property type="match status" value="1"/>
</dbReference>
<dbReference type="Gene3D" id="3.40.50.720">
    <property type="entry name" value="NAD(P)-binding Rossmann-like Domain"/>
    <property type="match status" value="1"/>
</dbReference>
<dbReference type="HAMAP" id="MF_00394">
    <property type="entry name" value="NAD_Glyc3P_dehydrog"/>
    <property type="match status" value="1"/>
</dbReference>
<dbReference type="InterPro" id="IPR008927">
    <property type="entry name" value="6-PGluconate_DH-like_C_sf"/>
</dbReference>
<dbReference type="InterPro" id="IPR013328">
    <property type="entry name" value="6PGD_dom2"/>
</dbReference>
<dbReference type="InterPro" id="IPR006168">
    <property type="entry name" value="G3P_DH_NAD-dep"/>
</dbReference>
<dbReference type="InterPro" id="IPR006109">
    <property type="entry name" value="G3P_DH_NAD-dep_C"/>
</dbReference>
<dbReference type="InterPro" id="IPR011128">
    <property type="entry name" value="G3P_DH_NAD-dep_N"/>
</dbReference>
<dbReference type="InterPro" id="IPR036291">
    <property type="entry name" value="NAD(P)-bd_dom_sf"/>
</dbReference>
<dbReference type="NCBIfam" id="NF000940">
    <property type="entry name" value="PRK00094.1-2"/>
    <property type="match status" value="1"/>
</dbReference>
<dbReference type="NCBIfam" id="NF000941">
    <property type="entry name" value="PRK00094.1-3"/>
    <property type="match status" value="1"/>
</dbReference>
<dbReference type="NCBIfam" id="NF000942">
    <property type="entry name" value="PRK00094.1-4"/>
    <property type="match status" value="1"/>
</dbReference>
<dbReference type="PANTHER" id="PTHR11728">
    <property type="entry name" value="GLYCEROL-3-PHOSPHATE DEHYDROGENASE"/>
    <property type="match status" value="1"/>
</dbReference>
<dbReference type="PANTHER" id="PTHR11728:SF1">
    <property type="entry name" value="GLYCEROL-3-PHOSPHATE DEHYDROGENASE [NAD(+)] 2, CHLOROPLASTIC"/>
    <property type="match status" value="1"/>
</dbReference>
<dbReference type="Pfam" id="PF07479">
    <property type="entry name" value="NAD_Gly3P_dh_C"/>
    <property type="match status" value="1"/>
</dbReference>
<dbReference type="Pfam" id="PF01210">
    <property type="entry name" value="NAD_Gly3P_dh_N"/>
    <property type="match status" value="1"/>
</dbReference>
<dbReference type="PIRSF" id="PIRSF000114">
    <property type="entry name" value="Glycerol-3-P_dh"/>
    <property type="match status" value="1"/>
</dbReference>
<dbReference type="PRINTS" id="PR00077">
    <property type="entry name" value="GPDHDRGNASE"/>
</dbReference>
<dbReference type="SUPFAM" id="SSF48179">
    <property type="entry name" value="6-phosphogluconate dehydrogenase C-terminal domain-like"/>
    <property type="match status" value="1"/>
</dbReference>
<dbReference type="SUPFAM" id="SSF51735">
    <property type="entry name" value="NAD(P)-binding Rossmann-fold domains"/>
    <property type="match status" value="1"/>
</dbReference>
<dbReference type="PROSITE" id="PS00957">
    <property type="entry name" value="NAD_G3PDH"/>
    <property type="match status" value="1"/>
</dbReference>
<organism>
    <name type="scientific">Lactococcus lactis subsp. lactis (strain IL1403)</name>
    <name type="common">Streptococcus lactis</name>
    <dbReference type="NCBI Taxonomy" id="272623"/>
    <lineage>
        <taxon>Bacteria</taxon>
        <taxon>Bacillati</taxon>
        <taxon>Bacillota</taxon>
        <taxon>Bacilli</taxon>
        <taxon>Lactobacillales</taxon>
        <taxon>Streptococcaceae</taxon>
        <taxon>Lactococcus</taxon>
    </lineage>
</organism>
<keyword id="KW-0963">Cytoplasm</keyword>
<keyword id="KW-0444">Lipid biosynthesis</keyword>
<keyword id="KW-0443">Lipid metabolism</keyword>
<keyword id="KW-0520">NAD</keyword>
<keyword id="KW-0521">NADP</keyword>
<keyword id="KW-0547">Nucleotide-binding</keyword>
<keyword id="KW-0560">Oxidoreductase</keyword>
<keyword id="KW-0594">Phospholipid biosynthesis</keyword>
<keyword id="KW-1208">Phospholipid metabolism</keyword>
<keyword id="KW-1185">Reference proteome</keyword>
<evidence type="ECO:0000255" key="1">
    <source>
        <dbReference type="HAMAP-Rule" id="MF_00394"/>
    </source>
</evidence>